<proteinExistence type="inferred from homology"/>
<sequence>MANNIPIGSPVRTKAIINRYFVKAKKNLGQNFLVDQDAILGIVEAADIQPGDQVIEIGPGIGSLTEQLLLAGAKVFAYEVDDSLPEILHNELPKKIGEQSLNDRFKLLLKDVLKADFQNDLAGFFDMKQPIKVVANLPYYITTPIIFALSESDLHFSSLTLMMQKEVAERLEAKPGNKEYGPLTISVQTEMNVKIALEVKSTSFMPRPKVDSSVVVLTPLQERPKIENRKHFIWVVKMCFSQRRKTLNNNLKALIPNAKEREALISKLGVDPRVRPEDLTIDQFIEIARNIPAK</sequence>
<accession>Q5FMG3</accession>
<name>RSMA_LACAC</name>
<reference key="1">
    <citation type="journal article" date="2005" name="Proc. Natl. Acad. Sci. U.S.A.">
        <title>Complete genome sequence of the probiotic lactic acid bacterium Lactobacillus acidophilus NCFM.</title>
        <authorList>
            <person name="Altermann E."/>
            <person name="Russell W.M."/>
            <person name="Azcarate-Peril M.A."/>
            <person name="Barrangou R."/>
            <person name="Buck B.L."/>
            <person name="McAuliffe O."/>
            <person name="Souther N."/>
            <person name="Dobson A."/>
            <person name="Duong T."/>
            <person name="Callanan M."/>
            <person name="Lick S."/>
            <person name="Hamrick A."/>
            <person name="Cano R."/>
            <person name="Klaenhammer T.R."/>
        </authorList>
    </citation>
    <scope>NUCLEOTIDE SEQUENCE [LARGE SCALE GENOMIC DNA]</scope>
    <source>
        <strain>ATCC 700396 / NCK56 / N2 / NCFM</strain>
    </source>
</reference>
<organism>
    <name type="scientific">Lactobacillus acidophilus (strain ATCC 700396 / NCK56 / N2 / NCFM)</name>
    <dbReference type="NCBI Taxonomy" id="272621"/>
    <lineage>
        <taxon>Bacteria</taxon>
        <taxon>Bacillati</taxon>
        <taxon>Bacillota</taxon>
        <taxon>Bacilli</taxon>
        <taxon>Lactobacillales</taxon>
        <taxon>Lactobacillaceae</taxon>
        <taxon>Lactobacillus</taxon>
    </lineage>
</organism>
<gene>
    <name evidence="1" type="primary">rsmA</name>
    <name evidence="1" type="synonym">ksgA</name>
    <name type="ordered locus">LBA0216</name>
</gene>
<dbReference type="EC" id="2.1.1.182" evidence="1"/>
<dbReference type="EMBL" id="CP000033">
    <property type="protein sequence ID" value="AAV42111.1"/>
    <property type="molecule type" value="Genomic_DNA"/>
</dbReference>
<dbReference type="RefSeq" id="WP_003548878.1">
    <property type="nucleotide sequence ID" value="NC_006814.3"/>
</dbReference>
<dbReference type="RefSeq" id="YP_193142.1">
    <property type="nucleotide sequence ID" value="NC_006814.3"/>
</dbReference>
<dbReference type="SMR" id="Q5FMG3"/>
<dbReference type="STRING" id="272621.LBA0216"/>
<dbReference type="GeneID" id="93290679"/>
<dbReference type="KEGG" id="lac:LBA0216"/>
<dbReference type="PATRIC" id="fig|272621.13.peg.206"/>
<dbReference type="eggNOG" id="COG0030">
    <property type="taxonomic scope" value="Bacteria"/>
</dbReference>
<dbReference type="HOGENOM" id="CLU_041220_0_0_9"/>
<dbReference type="OrthoDB" id="9814755at2"/>
<dbReference type="BioCyc" id="LACI272621:G1G49-210-MONOMER"/>
<dbReference type="Proteomes" id="UP000006381">
    <property type="component" value="Chromosome"/>
</dbReference>
<dbReference type="GO" id="GO:0005829">
    <property type="term" value="C:cytosol"/>
    <property type="evidence" value="ECO:0007669"/>
    <property type="project" value="TreeGrafter"/>
</dbReference>
<dbReference type="GO" id="GO:0052908">
    <property type="term" value="F:16S rRNA (adenine(1518)-N(6)/adenine(1519)-N(6))-dimethyltransferase activity"/>
    <property type="evidence" value="ECO:0007669"/>
    <property type="project" value="UniProtKB-EC"/>
</dbReference>
<dbReference type="GO" id="GO:0003723">
    <property type="term" value="F:RNA binding"/>
    <property type="evidence" value="ECO:0007669"/>
    <property type="project" value="UniProtKB-KW"/>
</dbReference>
<dbReference type="FunFam" id="3.40.50.150:FF:000023">
    <property type="entry name" value="Ribosomal RNA small subunit methyltransferase A"/>
    <property type="match status" value="1"/>
</dbReference>
<dbReference type="Gene3D" id="1.10.8.100">
    <property type="entry name" value="Ribosomal RNA adenine dimethylase-like, domain 2"/>
    <property type="match status" value="1"/>
</dbReference>
<dbReference type="Gene3D" id="3.40.50.150">
    <property type="entry name" value="Vaccinia Virus protein VP39"/>
    <property type="match status" value="1"/>
</dbReference>
<dbReference type="HAMAP" id="MF_00607">
    <property type="entry name" value="16SrRNA_methyltr_A"/>
    <property type="match status" value="1"/>
</dbReference>
<dbReference type="InterPro" id="IPR001737">
    <property type="entry name" value="KsgA/Erm"/>
</dbReference>
<dbReference type="InterPro" id="IPR023165">
    <property type="entry name" value="rRNA_Ade_diMease-like_C"/>
</dbReference>
<dbReference type="InterPro" id="IPR020596">
    <property type="entry name" value="rRNA_Ade_Mease_Trfase_CS"/>
</dbReference>
<dbReference type="InterPro" id="IPR020598">
    <property type="entry name" value="rRNA_Ade_methylase_Trfase_N"/>
</dbReference>
<dbReference type="InterPro" id="IPR011530">
    <property type="entry name" value="rRNA_adenine_dimethylase"/>
</dbReference>
<dbReference type="InterPro" id="IPR029063">
    <property type="entry name" value="SAM-dependent_MTases_sf"/>
</dbReference>
<dbReference type="NCBIfam" id="TIGR00755">
    <property type="entry name" value="ksgA"/>
    <property type="match status" value="1"/>
</dbReference>
<dbReference type="PANTHER" id="PTHR11727">
    <property type="entry name" value="DIMETHYLADENOSINE TRANSFERASE"/>
    <property type="match status" value="1"/>
</dbReference>
<dbReference type="PANTHER" id="PTHR11727:SF7">
    <property type="entry name" value="DIMETHYLADENOSINE TRANSFERASE-RELATED"/>
    <property type="match status" value="1"/>
</dbReference>
<dbReference type="Pfam" id="PF00398">
    <property type="entry name" value="RrnaAD"/>
    <property type="match status" value="1"/>
</dbReference>
<dbReference type="SMART" id="SM00650">
    <property type="entry name" value="rADc"/>
    <property type="match status" value="1"/>
</dbReference>
<dbReference type="SUPFAM" id="SSF53335">
    <property type="entry name" value="S-adenosyl-L-methionine-dependent methyltransferases"/>
    <property type="match status" value="1"/>
</dbReference>
<dbReference type="PROSITE" id="PS01131">
    <property type="entry name" value="RRNA_A_DIMETH"/>
    <property type="match status" value="1"/>
</dbReference>
<dbReference type="PROSITE" id="PS51689">
    <property type="entry name" value="SAM_RNA_A_N6_MT"/>
    <property type="match status" value="1"/>
</dbReference>
<evidence type="ECO:0000255" key="1">
    <source>
        <dbReference type="HAMAP-Rule" id="MF_00607"/>
    </source>
</evidence>
<keyword id="KW-0963">Cytoplasm</keyword>
<keyword id="KW-0489">Methyltransferase</keyword>
<keyword id="KW-1185">Reference proteome</keyword>
<keyword id="KW-0694">RNA-binding</keyword>
<keyword id="KW-0698">rRNA processing</keyword>
<keyword id="KW-0949">S-adenosyl-L-methionine</keyword>
<keyword id="KW-0808">Transferase</keyword>
<protein>
    <recommendedName>
        <fullName evidence="1">Ribosomal RNA small subunit methyltransferase A</fullName>
        <ecNumber evidence="1">2.1.1.182</ecNumber>
    </recommendedName>
    <alternativeName>
        <fullName evidence="1">16S rRNA (adenine(1518)-N(6)/adenine(1519)-N(6))-dimethyltransferase</fullName>
    </alternativeName>
    <alternativeName>
        <fullName evidence="1">16S rRNA dimethyladenosine transferase</fullName>
    </alternativeName>
    <alternativeName>
        <fullName evidence="1">16S rRNA dimethylase</fullName>
    </alternativeName>
    <alternativeName>
        <fullName evidence="1">S-adenosylmethionine-6-N', N'-adenosyl(rRNA) dimethyltransferase</fullName>
    </alternativeName>
</protein>
<comment type="function">
    <text evidence="1">Specifically dimethylates two adjacent adenosines (A1518 and A1519) in the loop of a conserved hairpin near the 3'-end of 16S rRNA in the 30S particle. May play a critical role in biogenesis of 30S subunits.</text>
</comment>
<comment type="catalytic activity">
    <reaction evidence="1">
        <text>adenosine(1518)/adenosine(1519) in 16S rRNA + 4 S-adenosyl-L-methionine = N(6)-dimethyladenosine(1518)/N(6)-dimethyladenosine(1519) in 16S rRNA + 4 S-adenosyl-L-homocysteine + 4 H(+)</text>
        <dbReference type="Rhea" id="RHEA:19609"/>
        <dbReference type="Rhea" id="RHEA-COMP:10232"/>
        <dbReference type="Rhea" id="RHEA-COMP:10233"/>
        <dbReference type="ChEBI" id="CHEBI:15378"/>
        <dbReference type="ChEBI" id="CHEBI:57856"/>
        <dbReference type="ChEBI" id="CHEBI:59789"/>
        <dbReference type="ChEBI" id="CHEBI:74411"/>
        <dbReference type="ChEBI" id="CHEBI:74493"/>
        <dbReference type="EC" id="2.1.1.182"/>
    </reaction>
</comment>
<comment type="subcellular location">
    <subcellularLocation>
        <location evidence="1">Cytoplasm</location>
    </subcellularLocation>
</comment>
<comment type="similarity">
    <text evidence="1">Belongs to the class I-like SAM-binding methyltransferase superfamily. rRNA adenine N(6)-methyltransferase family. RsmA subfamily.</text>
</comment>
<feature type="chain" id="PRO_0000101543" description="Ribosomal RNA small subunit methyltransferase A">
    <location>
        <begin position="1"/>
        <end position="294"/>
    </location>
</feature>
<feature type="binding site" evidence="1">
    <location>
        <position position="31"/>
    </location>
    <ligand>
        <name>S-adenosyl-L-methionine</name>
        <dbReference type="ChEBI" id="CHEBI:59789"/>
    </ligand>
</feature>
<feature type="binding site" evidence="1">
    <location>
        <position position="33"/>
    </location>
    <ligand>
        <name>S-adenosyl-L-methionine</name>
        <dbReference type="ChEBI" id="CHEBI:59789"/>
    </ligand>
</feature>
<feature type="binding site" evidence="1">
    <location>
        <position position="58"/>
    </location>
    <ligand>
        <name>S-adenosyl-L-methionine</name>
        <dbReference type="ChEBI" id="CHEBI:59789"/>
    </ligand>
</feature>
<feature type="binding site" evidence="1">
    <location>
        <position position="79"/>
    </location>
    <ligand>
        <name>S-adenosyl-L-methionine</name>
        <dbReference type="ChEBI" id="CHEBI:59789"/>
    </ligand>
</feature>
<feature type="binding site" evidence="1">
    <location>
        <position position="111"/>
    </location>
    <ligand>
        <name>S-adenosyl-L-methionine</name>
        <dbReference type="ChEBI" id="CHEBI:59789"/>
    </ligand>
</feature>
<feature type="binding site" evidence="1">
    <location>
        <position position="136"/>
    </location>
    <ligand>
        <name>S-adenosyl-L-methionine</name>
        <dbReference type="ChEBI" id="CHEBI:59789"/>
    </ligand>
</feature>